<comment type="function">
    <text evidence="2 7">RNA-binding protein that plays an essential role in the biogenesis of circular RNAs (circRNAs) which are produced by back-splicing circularization of pre-mRNAs. Within the nucleus, promotes circRNAs processing by stabilizing the regulatory elements residing in the flanking introns of the circularized exons. Plays thereby a role in the back-splicing of a subset of circRNAs. As a consequence, participates in a wide range of transcriptional and post-transcriptional processes. Binds to poly-U elements and AU-rich elements (AREs) in the 3'-UTR of target mRNAs (By similarity). Upon viral infection, ILF3 accumulates in the cytoplasm and participates in the innate antiviral response. Mechanistically, ILF3 becomes phosphorylated and activated by the double-stranded RNA-activated protein kinase/PKR which releases ILF3 from cellular mature circRNAs. In turn, unbound ILF3 molecules are able to interact with and thus inhibit viral mRNAs.</text>
</comment>
<comment type="subunit">
    <text evidence="2">Identified in a IGF2BP1-dependent mRNP granule complex containing untranslated mRNAs. Interacts with FUS and SMN. Interacts (via C-terminus) with PRMT1. Forms a complex with ILF2. Can also bind to PRKDC/XRCC7: this may stabilize the interaction of PRKDC/XRCC7 and the heterodimeric complex of XRCC6/KU70 and XRCC5/KU80. Forms a heteromeric complex with ZNF346 and ILF3. Found in a nuclear export complex with XPO5, ILF3, Ran and double-stranded RNA or double-stranded minihelix VA1 RNA. Found in a nuclear export complex with XPO5, RAN, ILF3, ZNF346 and double-stranded RNA. Interacts with XPO5 and ZNF346. Forms a complex with ILF2, YLPM1, KHDRBS1, RBMX, NCOA5 and PPP1CA. Interacts with AGO1 and AGO2. Interacts with DHX36; this interaction occurs in a RNA-dependent manner. Interacts with ELAVL1; this interaction occurs in a RNA-dependent manner. Interacts with HAVCR2; this interaction promotes ILF3 ubiquitination and subsequent degradation (By similarity).</text>
</comment>
<comment type="subcellular location">
    <subcellularLocation>
        <location evidence="2">Nucleus</location>
        <location evidence="2">Nucleolus</location>
    </subcellularLocation>
    <subcellularLocation>
        <location evidence="7">Cytoplasm</location>
    </subcellularLocation>
    <subcellularLocation>
        <location evidence="7">Nucleus</location>
    </subcellularLocation>
    <text evidence="7">Localizes in the cytoplasm in response to viral infection. The unphosphorylated form is retained in the nucleus by ILF2. Phosphorylation at Thr-188 and Thr-315 causes the dissociation of ILF2 from the ILF2-ILF3 complex resulting in a cytoplasmic sequestration of ILF3. Localized in cytoplasmic mRNP granules containing untranslated mRNAs.</text>
</comment>
<comment type="alternative products">
    <event type="alternative splicing"/>
    <isoform>
        <id>Q9Z1X4-1</id>
        <name>1</name>
        <sequence type="displayed"/>
    </isoform>
    <isoform>
        <id>Q9Z1X4-2</id>
        <name>2</name>
        <sequence type="described" ref="VSP_013406 VSP_013407 VSP_013408"/>
    </isoform>
    <isoform>
        <id>Q9Z1X4-3</id>
        <name>3</name>
        <sequence type="described" ref="VSP_013406"/>
    </isoform>
</comment>
<comment type="tissue specificity">
    <text>Ubiquitous. Expressed at high levels in the thymus, testis, ovary and at lower levelss in the spleen.</text>
</comment>
<comment type="PTM">
    <text evidence="7">Phosphorylated at Thr-188 and Thr-315 by PKR in response to RNA viruses. This phosphorylation results in the dissociation of ILF2 from the ILF2-ILF3 complex resulting in a cytoplasmic sequestration of ILF3 where it can bind to viral RNAs and impede viral replication.</text>
</comment>
<comment type="PTM">
    <text evidence="2">Methylated by protein arginine N-methyltransferase 1.</text>
</comment>
<comment type="sequence caution" evidence="12">
    <conflict type="frameshift">
        <sequence resource="EMBL-CDS" id="AAC71052"/>
    </conflict>
</comment>
<comment type="sequence caution" evidence="12">
    <conflict type="frameshift">
        <sequence resource="EMBL-CDS" id="BAC36863"/>
    </conflict>
</comment>
<keyword id="KW-0002">3D-structure</keyword>
<keyword id="KW-0007">Acetylation</keyword>
<keyword id="KW-0025">Alternative splicing</keyword>
<keyword id="KW-0051">Antiviral defense</keyword>
<keyword id="KW-0963">Cytoplasm</keyword>
<keyword id="KW-0903">Direct protein sequencing</keyword>
<keyword id="KW-0238">DNA-binding</keyword>
<keyword id="KW-1017">Isopeptide bond</keyword>
<keyword id="KW-0488">Methylation</keyword>
<keyword id="KW-0539">Nucleus</keyword>
<keyword id="KW-0597">Phosphoprotein</keyword>
<keyword id="KW-1185">Reference proteome</keyword>
<keyword id="KW-0677">Repeat</keyword>
<keyword id="KW-0694">RNA-binding</keyword>
<keyword id="KW-0804">Transcription</keyword>
<keyword id="KW-0805">Transcription regulation</keyword>
<keyword id="KW-0832">Ubl conjugation</keyword>
<proteinExistence type="evidence at protein level"/>
<gene>
    <name type="primary">Ilf3</name>
</gene>
<evidence type="ECO:0000250" key="1"/>
<evidence type="ECO:0000250" key="2">
    <source>
        <dbReference type="UniProtKB" id="Q12906"/>
    </source>
</evidence>
<evidence type="ECO:0000255" key="3"/>
<evidence type="ECO:0000255" key="4">
    <source>
        <dbReference type="PROSITE-ProRule" id="PRU00266"/>
    </source>
</evidence>
<evidence type="ECO:0000255" key="5">
    <source>
        <dbReference type="PROSITE-ProRule" id="PRU01040"/>
    </source>
</evidence>
<evidence type="ECO:0000256" key="6">
    <source>
        <dbReference type="SAM" id="MobiDB-lite"/>
    </source>
</evidence>
<evidence type="ECO:0000269" key="7">
    <source>
    </source>
</evidence>
<evidence type="ECO:0000303" key="8">
    <source>
    </source>
</evidence>
<evidence type="ECO:0000303" key="9">
    <source>
    </source>
</evidence>
<evidence type="ECO:0000303" key="10">
    <source>
    </source>
</evidence>
<evidence type="ECO:0000303" key="11">
    <source ref="3"/>
</evidence>
<evidence type="ECO:0000305" key="12"/>
<evidence type="ECO:0007744" key="13">
    <source>
    </source>
</evidence>
<evidence type="ECO:0007829" key="14">
    <source>
        <dbReference type="PDB" id="4AT7"/>
    </source>
</evidence>
<evidence type="ECO:0007829" key="15">
    <source>
        <dbReference type="PDB" id="4AT9"/>
    </source>
</evidence>
<evidence type="ECO:0007829" key="16">
    <source>
        <dbReference type="PDB" id="5DV7"/>
    </source>
</evidence>
<sequence>MRPMRIFVNDDRHVMAKHSSVYPTQEELEAVQNMVSHTERALKAVSDWIDEQEKGNSELSEAENMDTPPDDESKEGAGEQKAEHMTRTLRGVMRVGLVAKGLLLKGDLDLELVLLCKEKPTTALLDKVADNLAIQLTTVTEDKYEILQSVDDAAIVIKNTKEPPLSLTIHLTSPVVREEMEKVLAGETLSVNDPPDVLDRQKCLAALASLRHAKWFQARANGLKSCVIVIRVLRDLCTRVPTWGPLRGWPLELLCEKSIGTANRPMGAGEALRRVLECLASGIVMPDGSGIYDPCEKEATDAIGHLDRQQREDITQSAQHALRLAAFGQLHKVLGMDPLPSKMPKKPKNENPVDYTVQIPPSTTYAITPMKRPMEEDGEEKSPSKKKKKIQKKEEKADPPQAMNALMRLNQLKPGLQYKLISQTGPVHAPIFTMSVEVDGSNFEASGPSKKTAKLHVAVKVLQDMGLPTGAEGRDSSKGEDSAEESDGKPAIVAPPPVVEAVSNPSSVFPSDATTEQGPILTKHGKNPVMELNEKRRGLKYELISETGGSHDKRFVMEVEVDGQKFQGAGSNKKVAKAYAALAALEKLFPDTPLALEANKKKRTPVPVRGGPKFAAKPHNPGFGMGGPMHNEVPPPPNIRGRGRGGNIRGRGRGRGFGGANHGGGYMNAGAGYGSYGYSSNSATAGYSQFYSNGGHSGNAGGGGSGGGGGSSSYSSYYQGDSYNSPVPPKHAGKKPLHGGQQKASYSSGYQSHQGQQQPYNQSQYSSYGTPQGKQKGYGHGQGSYSSYSNSYNSPGGGGGSDYSYDSKFNYSGSGGRSGGNSYGSSGSSSYNTGSHGGYGTGSGGSSSYQGKQGGYSSQSNYSSPGSSQSYSGPASSYQSSQGGYSRNTEHSMNYQYR</sequence>
<protein>
    <recommendedName>
        <fullName>Interleukin enhancer-binding factor 3</fullName>
    </recommendedName>
</protein>
<dbReference type="EMBL" id="AF506968">
    <property type="protein sequence ID" value="AAM34210.1"/>
    <property type="molecule type" value="Genomic_DNA"/>
</dbReference>
<dbReference type="EMBL" id="AF098967">
    <property type="protein sequence ID" value="AAC71052.1"/>
    <property type="status" value="ALT_FRAME"/>
    <property type="molecule type" value="mRNA"/>
</dbReference>
<dbReference type="EMBL" id="AF497751">
    <property type="protein sequence ID" value="AAO23054.1"/>
    <property type="molecule type" value="mRNA"/>
</dbReference>
<dbReference type="EMBL" id="AF497752">
    <property type="protein sequence ID" value="AAO23055.1"/>
    <property type="molecule type" value="mRNA"/>
</dbReference>
<dbReference type="EMBL" id="AK048096">
    <property type="protein sequence ID" value="BAC33239.1"/>
    <property type="molecule type" value="mRNA"/>
</dbReference>
<dbReference type="EMBL" id="AK077560">
    <property type="protein sequence ID" value="BAC36863.1"/>
    <property type="status" value="ALT_FRAME"/>
    <property type="molecule type" value="mRNA"/>
</dbReference>
<dbReference type="EMBL" id="AK088604">
    <property type="protein sequence ID" value="BAC40448.1"/>
    <property type="molecule type" value="mRNA"/>
</dbReference>
<dbReference type="EMBL" id="BC047272">
    <property type="protein sequence ID" value="AAH47272.1"/>
    <property type="molecule type" value="mRNA"/>
</dbReference>
<dbReference type="CCDS" id="CCDS40552.1">
    <molecule id="Q9Z1X4-1"/>
</dbReference>
<dbReference type="CCDS" id="CCDS90512.1">
    <molecule id="Q9Z1X4-2"/>
</dbReference>
<dbReference type="CCDS" id="CCDS90514.1">
    <molecule id="Q9Z1X4-3"/>
</dbReference>
<dbReference type="RefSeq" id="NP_001036172.1">
    <molecule id="Q9Z1X4-1"/>
    <property type="nucleotide sequence ID" value="NM_001042707.2"/>
</dbReference>
<dbReference type="RefSeq" id="NP_001036173.1">
    <molecule id="Q9Z1X4-2"/>
    <property type="nucleotide sequence ID" value="NM_001042708.2"/>
</dbReference>
<dbReference type="RefSeq" id="NP_001264250.1">
    <property type="nucleotide sequence ID" value="NM_001277321.1"/>
</dbReference>
<dbReference type="RefSeq" id="NP_001264251.1">
    <molecule id="Q9Z1X4-3"/>
    <property type="nucleotide sequence ID" value="NM_001277322.1"/>
</dbReference>
<dbReference type="RefSeq" id="NP_034691.2">
    <molecule id="Q9Z1X4-3"/>
    <property type="nucleotide sequence ID" value="NM_010561.3"/>
</dbReference>
<dbReference type="RefSeq" id="XP_006510094.1">
    <property type="nucleotide sequence ID" value="XM_006510031.2"/>
</dbReference>
<dbReference type="PDB" id="4AT7">
    <property type="method" value="X-ray"/>
    <property type="resolution" value="1.90 A"/>
    <property type="chains" value="B=1-381"/>
</dbReference>
<dbReference type="PDB" id="4AT8">
    <property type="method" value="X-ray"/>
    <property type="resolution" value="2.69 A"/>
    <property type="chains" value="B/D=1-381"/>
</dbReference>
<dbReference type="PDB" id="4AT9">
    <property type="method" value="X-ray"/>
    <property type="resolution" value="2.80 A"/>
    <property type="chains" value="B=1-381"/>
</dbReference>
<dbReference type="PDB" id="4ATB">
    <property type="method" value="X-ray"/>
    <property type="resolution" value="3.10 A"/>
    <property type="chains" value="B/D=1-381"/>
</dbReference>
<dbReference type="PDB" id="5DV7">
    <property type="method" value="X-ray"/>
    <property type="resolution" value="3.50 A"/>
    <property type="chains" value="C=4-701"/>
</dbReference>
<dbReference type="PDBsum" id="4AT7"/>
<dbReference type="PDBsum" id="4AT8"/>
<dbReference type="PDBsum" id="4AT9"/>
<dbReference type="PDBsum" id="4ATB"/>
<dbReference type="PDBsum" id="5DV7"/>
<dbReference type="SMR" id="Q9Z1X4"/>
<dbReference type="BioGRID" id="200648">
    <property type="interactions" value="72"/>
</dbReference>
<dbReference type="FunCoup" id="Q9Z1X4">
    <property type="interactions" value="4832"/>
</dbReference>
<dbReference type="IntAct" id="Q9Z1X4">
    <property type="interactions" value="7"/>
</dbReference>
<dbReference type="MINT" id="Q9Z1X4"/>
<dbReference type="STRING" id="10090.ENSMUSP00000065770"/>
<dbReference type="GlyGen" id="Q9Z1X4">
    <property type="glycosylation" value="1 site, 1 O-linked glycan (1 site)"/>
</dbReference>
<dbReference type="iPTMnet" id="Q9Z1X4"/>
<dbReference type="PhosphoSitePlus" id="Q9Z1X4"/>
<dbReference type="SwissPalm" id="Q9Z1X4"/>
<dbReference type="jPOST" id="Q9Z1X4"/>
<dbReference type="PaxDb" id="10090-ENSMUSP00000065770"/>
<dbReference type="PeptideAtlas" id="Q9Z1X4"/>
<dbReference type="ProteomicsDB" id="267328">
    <molecule id="Q9Z1X4-1"/>
</dbReference>
<dbReference type="ProteomicsDB" id="267329">
    <molecule id="Q9Z1X4-2"/>
</dbReference>
<dbReference type="ProteomicsDB" id="267330">
    <molecule id="Q9Z1X4-3"/>
</dbReference>
<dbReference type="Pumba" id="Q9Z1X4"/>
<dbReference type="Antibodypedia" id="1051">
    <property type="antibodies" value="363 antibodies from 36 providers"/>
</dbReference>
<dbReference type="DNASU" id="16201"/>
<dbReference type="Ensembl" id="ENSMUST00000067646.12">
    <molecule id="Q9Z1X4-1"/>
    <property type="protein sequence ID" value="ENSMUSP00000065770.5"/>
    <property type="gene ID" value="ENSMUSG00000032178.15"/>
</dbReference>
<dbReference type="Ensembl" id="ENSMUST00000213603.2">
    <molecule id="Q9Z1X4-3"/>
    <property type="protein sequence ID" value="ENSMUSP00000149483.2"/>
    <property type="gene ID" value="ENSMUSG00000032178.15"/>
</dbReference>
<dbReference type="Ensembl" id="ENSMUST00000214758.2">
    <molecule id="Q9Z1X4-3"/>
    <property type="protein sequence ID" value="ENSMUSP00000151032.2"/>
    <property type="gene ID" value="ENSMUSG00000032178.15"/>
</dbReference>
<dbReference type="Ensembl" id="ENSMUST00000216892.2">
    <molecule id="Q9Z1X4-2"/>
    <property type="protein sequence ID" value="ENSMUSP00000149786.2"/>
    <property type="gene ID" value="ENSMUSG00000032178.15"/>
</dbReference>
<dbReference type="GeneID" id="16201"/>
<dbReference type="KEGG" id="mmu:16201"/>
<dbReference type="UCSC" id="uc009old.2">
    <molecule id="Q9Z1X4-3"/>
    <property type="organism name" value="mouse"/>
</dbReference>
<dbReference type="UCSC" id="uc009ole.2">
    <molecule id="Q9Z1X4-1"/>
    <property type="organism name" value="mouse"/>
</dbReference>
<dbReference type="AGR" id="MGI:1339973"/>
<dbReference type="CTD" id="3609"/>
<dbReference type="MGI" id="MGI:1339973">
    <property type="gene designation" value="Ilf3"/>
</dbReference>
<dbReference type="VEuPathDB" id="HostDB:ENSMUSG00000032178"/>
<dbReference type="eggNOG" id="KOG3792">
    <property type="taxonomic scope" value="Eukaryota"/>
</dbReference>
<dbReference type="GeneTree" id="ENSGT00940000156719"/>
<dbReference type="InParanoid" id="Q9Z1X4"/>
<dbReference type="OMA" id="PANHTQY"/>
<dbReference type="PhylomeDB" id="Q9Z1X4"/>
<dbReference type="TreeFam" id="TF320194"/>
<dbReference type="Reactome" id="R-MMU-9762293">
    <property type="pathway name" value="Regulation of CDH11 gene transcription"/>
</dbReference>
<dbReference type="Reactome" id="R-MMU-9833482">
    <property type="pathway name" value="PKR-mediated signaling"/>
</dbReference>
<dbReference type="BioGRID-ORCS" id="16201">
    <property type="hits" value="12 hits in 80 CRISPR screens"/>
</dbReference>
<dbReference type="CD-CODE" id="DE1E139C">
    <property type="entry name" value="Chromatoid body"/>
</dbReference>
<dbReference type="ChiTaRS" id="Ilf3">
    <property type="organism name" value="mouse"/>
</dbReference>
<dbReference type="EvolutionaryTrace" id="Q9Z1X4"/>
<dbReference type="PRO" id="PR:Q9Z1X4"/>
<dbReference type="Proteomes" id="UP000000589">
    <property type="component" value="Chromosome 9"/>
</dbReference>
<dbReference type="RNAct" id="Q9Z1X4">
    <property type="molecule type" value="protein"/>
</dbReference>
<dbReference type="Bgee" id="ENSMUSG00000032178">
    <property type="expression patterns" value="Expressed in embryonic post-anal tail and 298 other cell types or tissues"/>
</dbReference>
<dbReference type="ExpressionAtlas" id="Q9Z1X4">
    <property type="expression patterns" value="baseline and differential"/>
</dbReference>
<dbReference type="GO" id="GO:0005737">
    <property type="term" value="C:cytoplasm"/>
    <property type="evidence" value="ECO:0000314"/>
    <property type="project" value="UniProtKB"/>
</dbReference>
<dbReference type="GO" id="GO:0005739">
    <property type="term" value="C:mitochondrion"/>
    <property type="evidence" value="ECO:0007669"/>
    <property type="project" value="Ensembl"/>
</dbReference>
<dbReference type="GO" id="GO:0005730">
    <property type="term" value="C:nucleolus"/>
    <property type="evidence" value="ECO:0007669"/>
    <property type="project" value="UniProtKB-SubCell"/>
</dbReference>
<dbReference type="GO" id="GO:0005654">
    <property type="term" value="C:nucleoplasm"/>
    <property type="evidence" value="ECO:0007669"/>
    <property type="project" value="Ensembl"/>
</dbReference>
<dbReference type="GO" id="GO:0005634">
    <property type="term" value="C:nucleus"/>
    <property type="evidence" value="ECO:0000314"/>
    <property type="project" value="UniProtKB"/>
</dbReference>
<dbReference type="GO" id="GO:1990904">
    <property type="term" value="C:ribonucleoprotein complex"/>
    <property type="evidence" value="ECO:0000250"/>
    <property type="project" value="UniProtKB"/>
</dbReference>
<dbReference type="GO" id="GO:0003677">
    <property type="term" value="F:DNA binding"/>
    <property type="evidence" value="ECO:0000304"/>
    <property type="project" value="MGI"/>
</dbReference>
<dbReference type="GO" id="GO:0003725">
    <property type="term" value="F:double-stranded RNA binding"/>
    <property type="evidence" value="ECO:0007669"/>
    <property type="project" value="Ensembl"/>
</dbReference>
<dbReference type="GO" id="GO:0035925">
    <property type="term" value="F:mRNA 3'-UTR AU-rich region binding"/>
    <property type="evidence" value="ECO:0000250"/>
    <property type="project" value="UniProtKB"/>
</dbReference>
<dbReference type="GO" id="GO:0001618">
    <property type="term" value="F:virus receptor activity"/>
    <property type="evidence" value="ECO:0007669"/>
    <property type="project" value="Ensembl"/>
</dbReference>
<dbReference type="GO" id="GO:0051607">
    <property type="term" value="P:defense response to virus"/>
    <property type="evidence" value="ECO:0007669"/>
    <property type="project" value="UniProtKB-KW"/>
</dbReference>
<dbReference type="GO" id="GO:0045892">
    <property type="term" value="P:negative regulation of DNA-templated transcription"/>
    <property type="evidence" value="ECO:0007669"/>
    <property type="project" value="Ensembl"/>
</dbReference>
<dbReference type="GO" id="GO:0017148">
    <property type="term" value="P:negative regulation of translation"/>
    <property type="evidence" value="ECO:0000315"/>
    <property type="project" value="UniProtKB"/>
</dbReference>
<dbReference type="GO" id="GO:0045071">
    <property type="term" value="P:negative regulation of viral genome replication"/>
    <property type="evidence" value="ECO:0000315"/>
    <property type="project" value="UniProtKB"/>
</dbReference>
<dbReference type="GO" id="GO:0045893">
    <property type="term" value="P:positive regulation of DNA-templated transcription"/>
    <property type="evidence" value="ECO:0007669"/>
    <property type="project" value="Ensembl"/>
</dbReference>
<dbReference type="GO" id="GO:0006468">
    <property type="term" value="P:protein phosphorylation"/>
    <property type="evidence" value="ECO:0000314"/>
    <property type="project" value="UniProtKB"/>
</dbReference>
<dbReference type="GO" id="GO:0160091">
    <property type="term" value="P:spliceosome-depend formation of circular RNA"/>
    <property type="evidence" value="ECO:0000250"/>
    <property type="project" value="UniProtKB"/>
</dbReference>
<dbReference type="CDD" id="cd19910">
    <property type="entry name" value="DSRM_ILF3_rpt1"/>
    <property type="match status" value="1"/>
</dbReference>
<dbReference type="CDD" id="cd19912">
    <property type="entry name" value="DSRM_ILF3_rpt2"/>
    <property type="match status" value="1"/>
</dbReference>
<dbReference type="DisProt" id="DP01562"/>
<dbReference type="FunFam" id="1.10.1410.40:FF:000001">
    <property type="entry name" value="interleukin enhancer-binding factor 3 isoform X1"/>
    <property type="match status" value="1"/>
</dbReference>
<dbReference type="FunFam" id="3.30.160.20:FF:000006">
    <property type="entry name" value="interleukin enhancer-binding factor 3 isoform X2"/>
    <property type="match status" value="1"/>
</dbReference>
<dbReference type="FunFam" id="3.30.160.20:FF:000008">
    <property type="entry name" value="interleukin enhancer-binding factor 3 isoform X2"/>
    <property type="match status" value="1"/>
</dbReference>
<dbReference type="Gene3D" id="1.10.1410.40">
    <property type="match status" value="1"/>
</dbReference>
<dbReference type="Gene3D" id="3.30.160.20">
    <property type="match status" value="2"/>
</dbReference>
<dbReference type="Gene3D" id="3.30.460.10">
    <property type="entry name" value="Beta Polymerase, domain 2"/>
    <property type="match status" value="2"/>
</dbReference>
<dbReference type="InterPro" id="IPR014720">
    <property type="entry name" value="dsRBD_dom"/>
</dbReference>
<dbReference type="InterPro" id="IPR033099">
    <property type="entry name" value="DSRM1_ILF3"/>
</dbReference>
<dbReference type="InterPro" id="IPR006561">
    <property type="entry name" value="DZF_dom"/>
</dbReference>
<dbReference type="InterPro" id="IPR049402">
    <property type="entry name" value="DZF_dom_C"/>
</dbReference>
<dbReference type="InterPro" id="IPR049401">
    <property type="entry name" value="DZF_dom_N"/>
</dbReference>
<dbReference type="InterPro" id="IPR043519">
    <property type="entry name" value="NT_sf"/>
</dbReference>
<dbReference type="PANTHER" id="PTHR45762:SF4">
    <property type="entry name" value="INTERLEUKIN ENHANCER-BINDING FACTOR 3"/>
    <property type="match status" value="1"/>
</dbReference>
<dbReference type="PANTHER" id="PTHR45762">
    <property type="entry name" value="ZINC FINGER RNA-BINDING PROTEIN"/>
    <property type="match status" value="1"/>
</dbReference>
<dbReference type="Pfam" id="PF00035">
    <property type="entry name" value="dsrm"/>
    <property type="match status" value="2"/>
</dbReference>
<dbReference type="Pfam" id="PF20965">
    <property type="entry name" value="DZF_C"/>
    <property type="match status" value="1"/>
</dbReference>
<dbReference type="Pfam" id="PF07528">
    <property type="entry name" value="DZF_N"/>
    <property type="match status" value="1"/>
</dbReference>
<dbReference type="SMART" id="SM00358">
    <property type="entry name" value="DSRM"/>
    <property type="match status" value="2"/>
</dbReference>
<dbReference type="SMART" id="SM00572">
    <property type="entry name" value="DZF"/>
    <property type="match status" value="1"/>
</dbReference>
<dbReference type="SUPFAM" id="SSF54768">
    <property type="entry name" value="dsRNA-binding domain-like"/>
    <property type="match status" value="2"/>
</dbReference>
<dbReference type="PROSITE" id="PS50137">
    <property type="entry name" value="DS_RBD"/>
    <property type="match status" value="2"/>
</dbReference>
<dbReference type="PROSITE" id="PS51703">
    <property type="entry name" value="DZF"/>
    <property type="match status" value="1"/>
</dbReference>
<accession>Q9Z1X4</accession>
<accession>Q80VD5</accession>
<accession>Q812A1</accession>
<accession>Q8BP80</accession>
<accession>Q8C2H8</accession>
<accession>Q8K588</accession>
<name>ILF3_MOUSE</name>
<reference key="1">
    <citation type="journal article" date="1994" name="J. Biol. Chem.">
        <title>Cloning and expression of cyclosporin A- and FK506-sensitive nuclear factor of activated T-cells: NF45 and NF90.</title>
        <authorList>
            <person name="Kao P.N."/>
            <person name="Chen L."/>
            <person name="Brock G."/>
            <person name="Ng J."/>
            <person name="Kenny J."/>
            <person name="Smith A.J."/>
            <person name="Corthesy B."/>
        </authorList>
    </citation>
    <scope>NUCLEOTIDE SEQUENCE [GENOMIC DNA] (ISOFORM 1)</scope>
</reference>
<reference key="2">
    <citation type="journal article" date="1999" name="Mamm. Genome">
        <title>Cloning and characterization of the mouse interleukin enhancer binding factor 3 (Ilf3) homolog in a screen for RNA binding proteins.</title>
        <authorList>
            <person name="Buaas F.W."/>
            <person name="Lee K."/>
            <person name="Edelhoff S."/>
            <person name="Disteche C."/>
            <person name="Braun R.E."/>
        </authorList>
    </citation>
    <scope>NUCLEOTIDE SEQUENCE [MRNA] (ISOFORM 3)</scope>
    <scope>CHARACTERIZATION</scope>
    <source>
        <tissue>Testis</tissue>
    </source>
</reference>
<reference key="3">
    <citation type="submission" date="2002-03" db="EMBL/GenBank/DDBJ databases">
        <title>Alternative splicing generates two mRNA transcripts of mouse interleukin enhancer binding factor 3 (Ilf3).</title>
        <authorList>
            <person name="Gasmi L."/>
            <person name="Viranaicken W."/>
            <person name="Denoulet P."/>
            <person name="Larcher J.-C."/>
        </authorList>
    </citation>
    <scope>NUCLEOTIDE SEQUENCE [MRNA] (ISOFORMS 1 AND 3)</scope>
</reference>
<reference key="4">
    <citation type="journal article" date="2005" name="Science">
        <title>The transcriptional landscape of the mammalian genome.</title>
        <authorList>
            <person name="Carninci P."/>
            <person name="Kasukawa T."/>
            <person name="Katayama S."/>
            <person name="Gough J."/>
            <person name="Frith M.C."/>
            <person name="Maeda N."/>
            <person name="Oyama R."/>
            <person name="Ravasi T."/>
            <person name="Lenhard B."/>
            <person name="Wells C."/>
            <person name="Kodzius R."/>
            <person name="Shimokawa K."/>
            <person name="Bajic V.B."/>
            <person name="Brenner S.E."/>
            <person name="Batalov S."/>
            <person name="Forrest A.R."/>
            <person name="Zavolan M."/>
            <person name="Davis M.J."/>
            <person name="Wilming L.G."/>
            <person name="Aidinis V."/>
            <person name="Allen J.E."/>
            <person name="Ambesi-Impiombato A."/>
            <person name="Apweiler R."/>
            <person name="Aturaliya R.N."/>
            <person name="Bailey T.L."/>
            <person name="Bansal M."/>
            <person name="Baxter L."/>
            <person name="Beisel K.W."/>
            <person name="Bersano T."/>
            <person name="Bono H."/>
            <person name="Chalk A.M."/>
            <person name="Chiu K.P."/>
            <person name="Choudhary V."/>
            <person name="Christoffels A."/>
            <person name="Clutterbuck D.R."/>
            <person name="Crowe M.L."/>
            <person name="Dalla E."/>
            <person name="Dalrymple B.P."/>
            <person name="de Bono B."/>
            <person name="Della Gatta G."/>
            <person name="di Bernardo D."/>
            <person name="Down T."/>
            <person name="Engstrom P."/>
            <person name="Fagiolini M."/>
            <person name="Faulkner G."/>
            <person name="Fletcher C.F."/>
            <person name="Fukushima T."/>
            <person name="Furuno M."/>
            <person name="Futaki S."/>
            <person name="Gariboldi M."/>
            <person name="Georgii-Hemming P."/>
            <person name="Gingeras T.R."/>
            <person name="Gojobori T."/>
            <person name="Green R.E."/>
            <person name="Gustincich S."/>
            <person name="Harbers M."/>
            <person name="Hayashi Y."/>
            <person name="Hensch T.K."/>
            <person name="Hirokawa N."/>
            <person name="Hill D."/>
            <person name="Huminiecki L."/>
            <person name="Iacono M."/>
            <person name="Ikeo K."/>
            <person name="Iwama A."/>
            <person name="Ishikawa T."/>
            <person name="Jakt M."/>
            <person name="Kanapin A."/>
            <person name="Katoh M."/>
            <person name="Kawasawa Y."/>
            <person name="Kelso J."/>
            <person name="Kitamura H."/>
            <person name="Kitano H."/>
            <person name="Kollias G."/>
            <person name="Krishnan S.P."/>
            <person name="Kruger A."/>
            <person name="Kummerfeld S.K."/>
            <person name="Kurochkin I.V."/>
            <person name="Lareau L.F."/>
            <person name="Lazarevic D."/>
            <person name="Lipovich L."/>
            <person name="Liu J."/>
            <person name="Liuni S."/>
            <person name="McWilliam S."/>
            <person name="Madan Babu M."/>
            <person name="Madera M."/>
            <person name="Marchionni L."/>
            <person name="Matsuda H."/>
            <person name="Matsuzawa S."/>
            <person name="Miki H."/>
            <person name="Mignone F."/>
            <person name="Miyake S."/>
            <person name="Morris K."/>
            <person name="Mottagui-Tabar S."/>
            <person name="Mulder N."/>
            <person name="Nakano N."/>
            <person name="Nakauchi H."/>
            <person name="Ng P."/>
            <person name="Nilsson R."/>
            <person name="Nishiguchi S."/>
            <person name="Nishikawa S."/>
            <person name="Nori F."/>
            <person name="Ohara O."/>
            <person name="Okazaki Y."/>
            <person name="Orlando V."/>
            <person name="Pang K.C."/>
            <person name="Pavan W.J."/>
            <person name="Pavesi G."/>
            <person name="Pesole G."/>
            <person name="Petrovsky N."/>
            <person name="Piazza S."/>
            <person name="Reed J."/>
            <person name="Reid J.F."/>
            <person name="Ring B.Z."/>
            <person name="Ringwald M."/>
            <person name="Rost B."/>
            <person name="Ruan Y."/>
            <person name="Salzberg S.L."/>
            <person name="Sandelin A."/>
            <person name="Schneider C."/>
            <person name="Schoenbach C."/>
            <person name="Sekiguchi K."/>
            <person name="Semple C.A."/>
            <person name="Seno S."/>
            <person name="Sessa L."/>
            <person name="Sheng Y."/>
            <person name="Shibata Y."/>
            <person name="Shimada H."/>
            <person name="Shimada K."/>
            <person name="Silva D."/>
            <person name="Sinclair B."/>
            <person name="Sperling S."/>
            <person name="Stupka E."/>
            <person name="Sugiura K."/>
            <person name="Sultana R."/>
            <person name="Takenaka Y."/>
            <person name="Taki K."/>
            <person name="Tammoja K."/>
            <person name="Tan S.L."/>
            <person name="Tang S."/>
            <person name="Taylor M.S."/>
            <person name="Tegner J."/>
            <person name="Teichmann S.A."/>
            <person name="Ueda H.R."/>
            <person name="van Nimwegen E."/>
            <person name="Verardo R."/>
            <person name="Wei C.L."/>
            <person name="Yagi K."/>
            <person name="Yamanishi H."/>
            <person name="Zabarovsky E."/>
            <person name="Zhu S."/>
            <person name="Zimmer A."/>
            <person name="Hide W."/>
            <person name="Bult C."/>
            <person name="Grimmond S.M."/>
            <person name="Teasdale R.D."/>
            <person name="Liu E.T."/>
            <person name="Brusic V."/>
            <person name="Quackenbush J."/>
            <person name="Wahlestedt C."/>
            <person name="Mattick J.S."/>
            <person name="Hume D.A."/>
            <person name="Kai C."/>
            <person name="Sasaki D."/>
            <person name="Tomaru Y."/>
            <person name="Fukuda S."/>
            <person name="Kanamori-Katayama M."/>
            <person name="Suzuki M."/>
            <person name="Aoki J."/>
            <person name="Arakawa T."/>
            <person name="Iida J."/>
            <person name="Imamura K."/>
            <person name="Itoh M."/>
            <person name="Kato T."/>
            <person name="Kawaji H."/>
            <person name="Kawagashira N."/>
            <person name="Kawashima T."/>
            <person name="Kojima M."/>
            <person name="Kondo S."/>
            <person name="Konno H."/>
            <person name="Nakano K."/>
            <person name="Ninomiya N."/>
            <person name="Nishio T."/>
            <person name="Okada M."/>
            <person name="Plessy C."/>
            <person name="Shibata K."/>
            <person name="Shiraki T."/>
            <person name="Suzuki S."/>
            <person name="Tagami M."/>
            <person name="Waki K."/>
            <person name="Watahiki A."/>
            <person name="Okamura-Oho Y."/>
            <person name="Suzuki H."/>
            <person name="Kawai J."/>
            <person name="Hayashizaki Y."/>
        </authorList>
    </citation>
    <scope>NUCLEOTIDE SEQUENCE [LARGE SCALE MRNA] (ISOFORM 1)</scope>
    <scope>NUCLEOTIDE SEQUENCE [LARGE SCALE MRNA] OF 1-516 (ISOFORM 2)</scope>
    <scope>NUCLEOTIDE SEQUENCE [LARGE SCALE MRNA] OF 549-898</scope>
    <source>
        <strain>C57BL/6J</strain>
        <tissue>Embryo</tissue>
        <tissue>Head</tissue>
        <tissue>Thymus</tissue>
    </source>
</reference>
<reference key="5">
    <citation type="journal article" date="2004" name="Genome Res.">
        <title>The status, quality, and expansion of the NIH full-length cDNA project: the Mammalian Gene Collection (MGC).</title>
        <authorList>
            <consortium name="The MGC Project Team"/>
        </authorList>
    </citation>
    <scope>NUCLEOTIDE SEQUENCE [LARGE SCALE MRNA] (ISOFORM 2)</scope>
    <source>
        <strain>FVB/N-3</strain>
        <tissue>Mammary tumor</tissue>
    </source>
</reference>
<reference key="6">
    <citation type="journal article" date="2004" name="FASEB J.">
        <title>Ilf3 and NF90 associate with the axonal targeting element of Tau mRNA.</title>
        <authorList>
            <person name="Larcher J.-C."/>
            <person name="Gasmi L."/>
            <person name="Viranaicken W."/>
            <person name="Edde B."/>
            <person name="Bernard R."/>
            <person name="Ginzburg I."/>
            <person name="Denoulet P."/>
        </authorList>
    </citation>
    <scope>PROTEIN SEQUENCE OF 163-176; 421-434; 614-628 AND 853-867</scope>
</reference>
<reference key="7">
    <citation type="journal article" date="2009" name="Mol. Cell. Proteomics">
        <title>Large scale localization of protein phosphorylation by use of electron capture dissociation mass spectrometry.</title>
        <authorList>
            <person name="Sweet S.M."/>
            <person name="Bailey C.M."/>
            <person name="Cunningham D.L."/>
            <person name="Heath J.K."/>
            <person name="Cooper H.J."/>
        </authorList>
    </citation>
    <scope>IDENTIFICATION BY MASS SPECTROMETRY [LARGE SCALE ANALYSIS]</scope>
    <source>
        <tissue>Embryonic fibroblast</tissue>
    </source>
</reference>
<reference key="8">
    <citation type="journal article" date="2010" name="Cell">
        <title>A tissue-specific atlas of mouse protein phosphorylation and expression.</title>
        <authorList>
            <person name="Huttlin E.L."/>
            <person name="Jedrychowski M.P."/>
            <person name="Elias J.E."/>
            <person name="Goswami T."/>
            <person name="Rad R."/>
            <person name="Beausoleil S.A."/>
            <person name="Villen J."/>
            <person name="Haas W."/>
            <person name="Sowa M.E."/>
            <person name="Gygi S.P."/>
        </authorList>
    </citation>
    <scope>PHOSPHORYLATION [LARGE SCALE ANALYSIS] AT THR-67; SER-190; SER-482 AND SER-486</scope>
    <scope>IDENTIFICATION BY MASS SPECTROMETRY [LARGE SCALE ANALYSIS]</scope>
    <source>
        <tissue>Brain</tissue>
        <tissue>Heart</tissue>
        <tissue>Kidney</tissue>
        <tissue>Liver</tissue>
        <tissue>Lung</tissue>
        <tissue>Pancreas</tissue>
        <tissue>Spleen</tissue>
        <tissue>Testis</tissue>
    </source>
</reference>
<reference key="9">
    <citation type="journal article" date="2010" name="Genes Dev.">
        <title>Phosphorylation of the NFAR proteins by the dsRNA-dependent protein kinase PKR constitutes a novel mechanism of translational regulation and cellular defense.</title>
        <authorList>
            <person name="Harashima A."/>
            <person name="Guettouche T."/>
            <person name="Barber G.N."/>
        </authorList>
    </citation>
    <scope>FUNCTION</scope>
    <scope>SUBCELLULAR LOCATION</scope>
    <scope>PHOSPHORYLATION AT THR-188 AND THR-315</scope>
</reference>
<organism>
    <name type="scientific">Mus musculus</name>
    <name type="common">Mouse</name>
    <dbReference type="NCBI Taxonomy" id="10090"/>
    <lineage>
        <taxon>Eukaryota</taxon>
        <taxon>Metazoa</taxon>
        <taxon>Chordata</taxon>
        <taxon>Craniata</taxon>
        <taxon>Vertebrata</taxon>
        <taxon>Euteleostomi</taxon>
        <taxon>Mammalia</taxon>
        <taxon>Eutheria</taxon>
        <taxon>Euarchontoglires</taxon>
        <taxon>Glires</taxon>
        <taxon>Rodentia</taxon>
        <taxon>Myomorpha</taxon>
        <taxon>Muroidea</taxon>
        <taxon>Muridae</taxon>
        <taxon>Murinae</taxon>
        <taxon>Mus</taxon>
        <taxon>Mus</taxon>
    </lineage>
</organism>
<feature type="chain" id="PRO_0000126071" description="Interleukin enhancer-binding factor 3">
    <location>
        <begin position="1"/>
        <end position="898"/>
    </location>
</feature>
<feature type="domain" description="DZF" evidence="5">
    <location>
        <begin position="5"/>
        <end position="378"/>
    </location>
</feature>
<feature type="domain" description="DRBM 1" evidence="4">
    <location>
        <begin position="398"/>
        <end position="467"/>
    </location>
</feature>
<feature type="domain" description="DRBM 2" evidence="4">
    <location>
        <begin position="524"/>
        <end position="590"/>
    </location>
</feature>
<feature type="region of interest" description="Disordered" evidence="6">
    <location>
        <begin position="52"/>
        <end position="85"/>
    </location>
</feature>
<feature type="region of interest" description="Disordered" evidence="6">
    <location>
        <begin position="363"/>
        <end position="402"/>
    </location>
</feature>
<feature type="region of interest" description="Disordered" evidence="6">
    <location>
        <begin position="466"/>
        <end position="495"/>
    </location>
</feature>
<feature type="region of interest" description="Disordered" evidence="6">
    <location>
        <begin position="505"/>
        <end position="524"/>
    </location>
</feature>
<feature type="region of interest" description="Interaction with PRMT1" evidence="1">
    <location>
        <begin position="609"/>
        <end position="898"/>
    </location>
</feature>
<feature type="region of interest" description="Disordered" evidence="6">
    <location>
        <begin position="631"/>
        <end position="661"/>
    </location>
</feature>
<feature type="region of interest" description="Disordered" evidence="6">
    <location>
        <begin position="719"/>
        <end position="898"/>
    </location>
</feature>
<feature type="short sequence motif" description="Bipartite nuclear localization signal" evidence="3">
    <location>
        <begin position="371"/>
        <end position="389"/>
    </location>
</feature>
<feature type="compositionally biased region" description="Acidic residues" evidence="6">
    <location>
        <begin position="60"/>
        <end position="73"/>
    </location>
</feature>
<feature type="compositionally biased region" description="Basic and acidic residues" evidence="6">
    <location>
        <begin position="74"/>
        <end position="85"/>
    </location>
</feature>
<feature type="compositionally biased region" description="Basic and acidic residues" evidence="6">
    <location>
        <begin position="372"/>
        <end position="383"/>
    </location>
</feature>
<feature type="compositionally biased region" description="Basic and acidic residues" evidence="6">
    <location>
        <begin position="472"/>
        <end position="481"/>
    </location>
</feature>
<feature type="compositionally biased region" description="Gly residues" evidence="6">
    <location>
        <begin position="644"/>
        <end position="661"/>
    </location>
</feature>
<feature type="compositionally biased region" description="Low complexity" evidence="6">
    <location>
        <begin position="745"/>
        <end position="769"/>
    </location>
</feature>
<feature type="compositionally biased region" description="Low complexity" evidence="6">
    <location>
        <begin position="783"/>
        <end position="794"/>
    </location>
</feature>
<feature type="compositionally biased region" description="Low complexity" evidence="6">
    <location>
        <begin position="802"/>
        <end position="812"/>
    </location>
</feature>
<feature type="compositionally biased region" description="Gly residues" evidence="6">
    <location>
        <begin position="813"/>
        <end position="822"/>
    </location>
</feature>
<feature type="compositionally biased region" description="Low complexity" evidence="6">
    <location>
        <begin position="823"/>
        <end position="834"/>
    </location>
</feature>
<feature type="compositionally biased region" description="Gly residues" evidence="6">
    <location>
        <begin position="835"/>
        <end position="845"/>
    </location>
</feature>
<feature type="compositionally biased region" description="Low complexity" evidence="6">
    <location>
        <begin position="846"/>
        <end position="886"/>
    </location>
</feature>
<feature type="modified residue" description="Phosphothreonine" evidence="13">
    <location>
        <position position="67"/>
    </location>
</feature>
<feature type="modified residue" description="N6-acetyllysine" evidence="2">
    <location>
        <position position="100"/>
    </location>
</feature>
<feature type="modified residue" description="Phosphothreonine; by PKR" evidence="7">
    <location>
        <position position="188"/>
    </location>
</feature>
<feature type="modified residue" description="Phosphoserine" evidence="13">
    <location>
        <position position="190"/>
    </location>
</feature>
<feature type="modified residue" description="Phosphothreonine; by PKR" evidence="7">
    <location>
        <position position="315"/>
    </location>
</feature>
<feature type="modified residue" description="Phosphoserine" evidence="2">
    <location>
        <position position="382"/>
    </location>
</feature>
<feature type="modified residue" description="Phosphoserine" evidence="2">
    <location>
        <position position="384"/>
    </location>
</feature>
<feature type="modified residue" description="N6-acetyllysine" evidence="2">
    <location>
        <position position="460"/>
    </location>
</feature>
<feature type="modified residue" description="Phosphoserine" evidence="2">
    <location>
        <position position="476"/>
    </location>
</feature>
<feature type="modified residue" description="Phosphoserine" evidence="2">
    <location>
        <position position="477"/>
    </location>
</feature>
<feature type="modified residue" description="Phosphoserine" evidence="13">
    <location>
        <position position="482"/>
    </location>
</feature>
<feature type="modified residue" description="Phosphoserine" evidence="13">
    <location>
        <position position="486"/>
    </location>
</feature>
<feature type="modified residue" description="Phosphothreonine" evidence="2">
    <location>
        <position position="592"/>
    </location>
</feature>
<feature type="modified residue" description="Phosphoserine" evidence="2">
    <location>
        <position position="794"/>
    </location>
</feature>
<feature type="modified residue" description="Phosphoserine" evidence="2">
    <location>
        <position position="812"/>
    </location>
</feature>
<feature type="modified residue" description="Phosphoserine" evidence="2">
    <location>
        <position position="814"/>
    </location>
</feature>
<feature type="modified residue" description="Phosphoserine" evidence="2">
    <location>
        <position position="818"/>
    </location>
</feature>
<feature type="cross-link" description="Glycyl lysine isopeptide (Lys-Gly) (interchain with G-Cter in ubiquitin)" evidence="2">
    <location>
        <position position="297"/>
    </location>
</feature>
<feature type="cross-link" description="Glycyl lysine isopeptide (Lys-Gly) (interchain with G-Cter in SUMO1)" evidence="2">
    <location>
        <position position="348"/>
    </location>
</feature>
<feature type="cross-link" description="Glycyl lysine isopeptide (Lys-Gly) (interchain with G-Cter in SUMO2)" evidence="2">
    <location>
        <position position="396"/>
    </location>
</feature>
<feature type="cross-link" description="Glycyl lysine isopeptide (Lys-Gly) (interchain with G-Cter in SUMO2)" evidence="2">
    <location>
        <position position="489"/>
    </location>
</feature>
<feature type="splice variant" id="VSP_013406" description="In isoform 2 and isoform 3." evidence="8 9 10 11">
    <original>M</original>
    <variation>MALYHHHFITRRRR</variation>
    <location>
        <position position="1"/>
    </location>
</feature>
<feature type="splice variant" id="VSP_013407" description="In isoform 2." evidence="9 10">
    <original>QFYSNGGHSGNAGGG</original>
    <variation>DFFTDCYGYHDFGAS</variation>
    <location>
        <begin position="689"/>
        <end position="703"/>
    </location>
</feature>
<feature type="splice variant" id="VSP_013408" description="In isoform 2." evidence="9 10">
    <location>
        <begin position="704"/>
        <end position="898"/>
    </location>
</feature>
<feature type="sequence conflict" description="In Ref. 2; AAC71052." evidence="12" ref="2">
    <original>G</original>
    <variation>C</variation>
    <location>
        <position position="796"/>
    </location>
</feature>
<feature type="helix" evidence="14">
    <location>
        <begin position="8"/>
        <end position="21"/>
    </location>
</feature>
<feature type="helix" evidence="14">
    <location>
        <begin position="25"/>
        <end position="53"/>
    </location>
</feature>
<feature type="strand" evidence="14">
    <location>
        <begin position="89"/>
        <end position="94"/>
    </location>
</feature>
<feature type="helix" evidence="14">
    <location>
        <begin position="96"/>
        <end position="100"/>
    </location>
</feature>
<feature type="strand" evidence="14">
    <location>
        <begin position="109"/>
        <end position="118"/>
    </location>
</feature>
<feature type="helix" evidence="14">
    <location>
        <begin position="122"/>
        <end position="136"/>
    </location>
</feature>
<feature type="turn" evidence="14">
    <location>
        <begin position="137"/>
        <end position="139"/>
    </location>
</feature>
<feature type="strand" evidence="14">
    <location>
        <begin position="145"/>
        <end position="149"/>
    </location>
</feature>
<feature type="turn" evidence="14">
    <location>
        <begin position="150"/>
        <end position="153"/>
    </location>
</feature>
<feature type="strand" evidence="14">
    <location>
        <begin position="154"/>
        <end position="158"/>
    </location>
</feature>
<feature type="strand" evidence="14">
    <location>
        <begin position="160"/>
        <end position="163"/>
    </location>
</feature>
<feature type="strand" evidence="14">
    <location>
        <begin position="166"/>
        <end position="172"/>
    </location>
</feature>
<feature type="helix" evidence="14">
    <location>
        <begin position="174"/>
        <end position="184"/>
    </location>
</feature>
<feature type="helix" evidence="14">
    <location>
        <begin position="200"/>
        <end position="219"/>
    </location>
</feature>
<feature type="turn" evidence="14">
    <location>
        <begin position="220"/>
        <end position="222"/>
    </location>
</feature>
<feature type="helix" evidence="14">
    <location>
        <begin position="226"/>
        <end position="239"/>
    </location>
</feature>
<feature type="helix" evidence="14">
    <location>
        <begin position="241"/>
        <end position="246"/>
    </location>
</feature>
<feature type="helix" evidence="14">
    <location>
        <begin position="249"/>
        <end position="260"/>
    </location>
</feature>
<feature type="strand" evidence="14">
    <location>
        <begin position="262"/>
        <end position="264"/>
    </location>
</feature>
<feature type="helix" evidence="14">
    <location>
        <begin position="268"/>
        <end position="280"/>
    </location>
</feature>
<feature type="turn" evidence="14">
    <location>
        <begin position="281"/>
        <end position="284"/>
    </location>
</feature>
<feature type="strand" evidence="15">
    <location>
        <begin position="285"/>
        <end position="288"/>
    </location>
</feature>
<feature type="turn" evidence="14">
    <location>
        <begin position="302"/>
        <end position="305"/>
    </location>
</feature>
<feature type="helix" evidence="14">
    <location>
        <begin position="308"/>
        <end position="326"/>
    </location>
</feature>
<feature type="helix" evidence="14">
    <location>
        <begin position="330"/>
        <end position="333"/>
    </location>
</feature>
<feature type="strand" evidence="14">
    <location>
        <begin position="363"/>
        <end position="365"/>
    </location>
</feature>
<feature type="helix" evidence="16">
    <location>
        <begin position="405"/>
        <end position="412"/>
    </location>
</feature>
<feature type="strand" evidence="16">
    <location>
        <begin position="419"/>
        <end position="425"/>
    </location>
</feature>
<feature type="strand" evidence="16">
    <location>
        <begin position="427"/>
        <end position="429"/>
    </location>
</feature>
<feature type="strand" evidence="16">
    <location>
        <begin position="431"/>
        <end position="438"/>
    </location>
</feature>
<feature type="strand" evidence="16">
    <location>
        <begin position="441"/>
        <end position="449"/>
    </location>
</feature>
<feature type="helix" evidence="16">
    <location>
        <begin position="450"/>
        <end position="465"/>
    </location>
</feature>
<feature type="turn" evidence="16">
    <location>
        <begin position="523"/>
        <end position="525"/>
    </location>
</feature>
<feature type="helix" evidence="16">
    <location>
        <begin position="528"/>
        <end position="535"/>
    </location>
</feature>
<feature type="strand" evidence="16">
    <location>
        <begin position="542"/>
        <end position="547"/>
    </location>
</feature>
<feature type="strand" evidence="16">
    <location>
        <begin position="549"/>
        <end position="551"/>
    </location>
</feature>
<feature type="strand" evidence="16">
    <location>
        <begin position="554"/>
        <end position="561"/>
    </location>
</feature>
<feature type="strand" evidence="16">
    <location>
        <begin position="564"/>
        <end position="572"/>
    </location>
</feature>
<feature type="helix" evidence="16">
    <location>
        <begin position="573"/>
        <end position="588"/>
    </location>
</feature>